<organism>
    <name type="scientific">Caldanaerobacter subterraneus subsp. tengcongensis (strain DSM 15242 / JCM 11007 / NBRC 100824 / MB4)</name>
    <name type="common">Thermoanaerobacter tengcongensis</name>
    <dbReference type="NCBI Taxonomy" id="273068"/>
    <lineage>
        <taxon>Bacteria</taxon>
        <taxon>Bacillati</taxon>
        <taxon>Bacillota</taxon>
        <taxon>Clostridia</taxon>
        <taxon>Thermoanaerobacterales</taxon>
        <taxon>Thermoanaerobacteraceae</taxon>
        <taxon>Caldanaerobacter</taxon>
    </lineage>
</organism>
<protein>
    <recommendedName>
        <fullName>Putative threonine-phosphate decarboxylase</fullName>
        <ecNumber>4.1.1.81</ecNumber>
    </recommendedName>
    <alternativeName>
        <fullName>L-threonine-O-3-phosphate decarboxylase</fullName>
    </alternativeName>
</protein>
<evidence type="ECO:0000250" key="1"/>
<evidence type="ECO:0000250" key="2">
    <source>
        <dbReference type="UniProtKB" id="P97084"/>
    </source>
</evidence>
<evidence type="ECO:0000305" key="3"/>
<keyword id="KW-0169">Cobalamin biosynthesis</keyword>
<keyword id="KW-0456">Lyase</keyword>
<keyword id="KW-0663">Pyridoxal phosphate</keyword>
<keyword id="KW-1185">Reference proteome</keyword>
<name>COBD_CALS4</name>
<feature type="chain" id="PRO_0000163823" description="Putative threonine-phosphate decarboxylase">
    <location>
        <begin position="1"/>
        <end position="367"/>
    </location>
</feature>
<feature type="binding site" evidence="2">
    <location>
        <begin position="12"/>
        <end position="13"/>
    </location>
    <ligand>
        <name>O-phospho-L-threonine</name>
        <dbReference type="ChEBI" id="CHEBI:58675"/>
    </ligand>
</feature>
<feature type="binding site" evidence="2">
    <location>
        <position position="29"/>
    </location>
    <ligand>
        <name>O-phospho-L-threonine</name>
        <dbReference type="ChEBI" id="CHEBI:58675"/>
    </ligand>
</feature>
<feature type="binding site" evidence="2">
    <location>
        <position position="152"/>
    </location>
    <ligand>
        <name>O-phospho-L-threonine</name>
        <dbReference type="ChEBI" id="CHEBI:58675"/>
    </ligand>
</feature>
<feature type="binding site" evidence="2">
    <location>
        <position position="320"/>
    </location>
    <ligand>
        <name>O-phospho-L-threonine</name>
        <dbReference type="ChEBI" id="CHEBI:58675"/>
    </ligand>
</feature>
<feature type="binding site" evidence="2">
    <location>
        <position position="334"/>
    </location>
    <ligand>
        <name>O-phospho-L-threonine</name>
        <dbReference type="ChEBI" id="CHEBI:58675"/>
    </ligand>
</feature>
<feature type="modified residue" description="N6-(pyridoxal phosphate)lysine" evidence="2">
    <location>
        <position position="213"/>
    </location>
</feature>
<dbReference type="EC" id="4.1.1.81"/>
<dbReference type="EMBL" id="AE008691">
    <property type="protein sequence ID" value="AAM23667.1"/>
    <property type="molecule type" value="Genomic_DNA"/>
</dbReference>
<dbReference type="SMR" id="Q8R5U4"/>
<dbReference type="STRING" id="273068.TTE0380"/>
<dbReference type="KEGG" id="tte:TTE0380"/>
<dbReference type="eggNOG" id="COG0079">
    <property type="taxonomic scope" value="Bacteria"/>
</dbReference>
<dbReference type="HOGENOM" id="CLU_017584_3_2_9"/>
<dbReference type="UniPathway" id="UPA00148"/>
<dbReference type="Proteomes" id="UP000000555">
    <property type="component" value="Chromosome"/>
</dbReference>
<dbReference type="GO" id="GO:0030170">
    <property type="term" value="F:pyridoxal phosphate binding"/>
    <property type="evidence" value="ECO:0007669"/>
    <property type="project" value="InterPro"/>
</dbReference>
<dbReference type="GO" id="GO:0048472">
    <property type="term" value="F:threonine-phosphate decarboxylase activity"/>
    <property type="evidence" value="ECO:0007669"/>
    <property type="project" value="UniProtKB-EC"/>
</dbReference>
<dbReference type="GO" id="GO:0009236">
    <property type="term" value="P:cobalamin biosynthetic process"/>
    <property type="evidence" value="ECO:0007669"/>
    <property type="project" value="UniProtKB-UniPathway"/>
</dbReference>
<dbReference type="CDD" id="cd00609">
    <property type="entry name" value="AAT_like"/>
    <property type="match status" value="1"/>
</dbReference>
<dbReference type="Gene3D" id="3.90.1150.10">
    <property type="entry name" value="Aspartate Aminotransferase, domain 1"/>
    <property type="match status" value="1"/>
</dbReference>
<dbReference type="Gene3D" id="3.40.640.10">
    <property type="entry name" value="Type I PLP-dependent aspartate aminotransferase-like (Major domain)"/>
    <property type="match status" value="1"/>
</dbReference>
<dbReference type="InterPro" id="IPR004839">
    <property type="entry name" value="Aminotransferase_I/II_large"/>
</dbReference>
<dbReference type="InterPro" id="IPR005860">
    <property type="entry name" value="CobD"/>
</dbReference>
<dbReference type="InterPro" id="IPR015424">
    <property type="entry name" value="PyrdxlP-dep_Trfase"/>
</dbReference>
<dbReference type="InterPro" id="IPR015421">
    <property type="entry name" value="PyrdxlP-dep_Trfase_major"/>
</dbReference>
<dbReference type="InterPro" id="IPR015422">
    <property type="entry name" value="PyrdxlP-dep_Trfase_small"/>
</dbReference>
<dbReference type="NCBIfam" id="TIGR01140">
    <property type="entry name" value="L_thr_O3P_dcar"/>
    <property type="match status" value="1"/>
</dbReference>
<dbReference type="PANTHER" id="PTHR42885">
    <property type="entry name" value="HISTIDINOL-PHOSPHATE AMINOTRANSFERASE-RELATED"/>
    <property type="match status" value="1"/>
</dbReference>
<dbReference type="PANTHER" id="PTHR42885:SF1">
    <property type="entry name" value="THREONINE-PHOSPHATE DECARBOXYLASE"/>
    <property type="match status" value="1"/>
</dbReference>
<dbReference type="Pfam" id="PF00155">
    <property type="entry name" value="Aminotran_1_2"/>
    <property type="match status" value="1"/>
</dbReference>
<dbReference type="SUPFAM" id="SSF53383">
    <property type="entry name" value="PLP-dependent transferases"/>
    <property type="match status" value="1"/>
</dbReference>
<comment type="function">
    <text evidence="1">Decarboxylates L-threonine-O-3-phosphate to yield (R)-1-amino-2-propanol O-2-phosphate, the precursor for the linkage between the nucleotide loop and the corrin ring in cobalamin.</text>
</comment>
<comment type="catalytic activity">
    <reaction>
        <text>O-phospho-L-threonine + H(+) = (R)-1-aminopropan-2-yl phosphate + CO2</text>
        <dbReference type="Rhea" id="RHEA:11492"/>
        <dbReference type="ChEBI" id="CHEBI:15378"/>
        <dbReference type="ChEBI" id="CHEBI:16526"/>
        <dbReference type="ChEBI" id="CHEBI:58563"/>
        <dbReference type="ChEBI" id="CHEBI:58675"/>
        <dbReference type="EC" id="4.1.1.81"/>
    </reaction>
</comment>
<comment type="cofactor">
    <cofactor evidence="1">
        <name>pyridoxal 5'-phosphate</name>
        <dbReference type="ChEBI" id="CHEBI:597326"/>
    </cofactor>
</comment>
<comment type="pathway">
    <text>Cofactor biosynthesis; adenosylcobalamin biosynthesis.</text>
</comment>
<comment type="similarity">
    <text evidence="3">Belongs to the class-II pyridoxal-phosphate-dependent aminotransferase family.</text>
</comment>
<accession>Q8R5U4</accession>
<gene>
    <name type="primary">cobD</name>
    <name type="ordered locus">TTE0380</name>
</gene>
<proteinExistence type="inferred from homology"/>
<sequence length="367" mass="42396">MKEGEKMKPYEHGGNIYDYQGNLIDFSSNINPLGPPEWIWEAIKEVDLSRYPDIKYRRLKEAIAEYVGCDRENIIVGNGAAELIHLFARAFKLKKPLIPSPSFLEYERAVKLNGGEPVYLKLEEEEGFRVNFAKVISKIEEADGLILGNPNNPTGQGIIREEIGILLKKAELMNIPVLIDEAFIEFMKDYKKYEALPLVKKHDKLFVVRAVTKFFGMPGIRLGYGIGSPSLIQKLEEYKEPWTVNAFAEAVGRWLFKDREYIEKTREYVNAEIEHMLFSLRTIDYLVAFDTKVNFILLKLKAGTVDEVKEKLLKKGILIRDASNFRYLDKRFFRVAVKRREDNMCLIEALRGLYEEGVMPDKERVVV</sequence>
<reference key="1">
    <citation type="journal article" date="2002" name="Genome Res.">
        <title>A complete sequence of the T. tengcongensis genome.</title>
        <authorList>
            <person name="Bao Q."/>
            <person name="Tian Y."/>
            <person name="Li W."/>
            <person name="Xu Z."/>
            <person name="Xuan Z."/>
            <person name="Hu S."/>
            <person name="Dong W."/>
            <person name="Yang J."/>
            <person name="Chen Y."/>
            <person name="Xue Y."/>
            <person name="Xu Y."/>
            <person name="Lai X."/>
            <person name="Huang L."/>
            <person name="Dong X."/>
            <person name="Ma Y."/>
            <person name="Ling L."/>
            <person name="Tan H."/>
            <person name="Chen R."/>
            <person name="Wang J."/>
            <person name="Yu J."/>
            <person name="Yang H."/>
        </authorList>
    </citation>
    <scope>NUCLEOTIDE SEQUENCE [LARGE SCALE GENOMIC DNA]</scope>
    <source>
        <strain>DSM 15242 / JCM 11007 / NBRC 100824 / MB4</strain>
    </source>
</reference>